<dbReference type="EMBL" id="CP000923">
    <property type="protein sequence ID" value="ABY92165.1"/>
    <property type="molecule type" value="Genomic_DNA"/>
</dbReference>
<dbReference type="RefSeq" id="WP_003868703.1">
    <property type="nucleotide sequence ID" value="NC_010320.1"/>
</dbReference>
<dbReference type="SMR" id="B0K5H2"/>
<dbReference type="KEGG" id="tex:Teth514_0863"/>
<dbReference type="HOGENOM" id="CLU_072226_1_1_9"/>
<dbReference type="Proteomes" id="UP000002155">
    <property type="component" value="Chromosome"/>
</dbReference>
<dbReference type="GO" id="GO:0015935">
    <property type="term" value="C:small ribosomal subunit"/>
    <property type="evidence" value="ECO:0007669"/>
    <property type="project" value="InterPro"/>
</dbReference>
<dbReference type="GO" id="GO:0019843">
    <property type="term" value="F:rRNA binding"/>
    <property type="evidence" value="ECO:0007669"/>
    <property type="project" value="UniProtKB-UniRule"/>
</dbReference>
<dbReference type="GO" id="GO:0003735">
    <property type="term" value="F:structural constituent of ribosome"/>
    <property type="evidence" value="ECO:0007669"/>
    <property type="project" value="InterPro"/>
</dbReference>
<dbReference type="GO" id="GO:0000049">
    <property type="term" value="F:tRNA binding"/>
    <property type="evidence" value="ECO:0007669"/>
    <property type="project" value="UniProtKB-UniRule"/>
</dbReference>
<dbReference type="GO" id="GO:0006412">
    <property type="term" value="P:translation"/>
    <property type="evidence" value="ECO:0007669"/>
    <property type="project" value="UniProtKB-UniRule"/>
</dbReference>
<dbReference type="CDD" id="cd14869">
    <property type="entry name" value="uS7_Bacteria"/>
    <property type="match status" value="1"/>
</dbReference>
<dbReference type="FunFam" id="1.10.455.10:FF:000001">
    <property type="entry name" value="30S ribosomal protein S7"/>
    <property type="match status" value="1"/>
</dbReference>
<dbReference type="Gene3D" id="1.10.455.10">
    <property type="entry name" value="Ribosomal protein S7 domain"/>
    <property type="match status" value="1"/>
</dbReference>
<dbReference type="HAMAP" id="MF_00480_B">
    <property type="entry name" value="Ribosomal_uS7_B"/>
    <property type="match status" value="1"/>
</dbReference>
<dbReference type="InterPro" id="IPR000235">
    <property type="entry name" value="Ribosomal_uS7"/>
</dbReference>
<dbReference type="InterPro" id="IPR005717">
    <property type="entry name" value="Ribosomal_uS7_bac/org-type"/>
</dbReference>
<dbReference type="InterPro" id="IPR023798">
    <property type="entry name" value="Ribosomal_uS7_dom"/>
</dbReference>
<dbReference type="InterPro" id="IPR036823">
    <property type="entry name" value="Ribosomal_uS7_dom_sf"/>
</dbReference>
<dbReference type="NCBIfam" id="TIGR01029">
    <property type="entry name" value="rpsG_bact"/>
    <property type="match status" value="1"/>
</dbReference>
<dbReference type="PANTHER" id="PTHR11205">
    <property type="entry name" value="RIBOSOMAL PROTEIN S7"/>
    <property type="match status" value="1"/>
</dbReference>
<dbReference type="Pfam" id="PF00177">
    <property type="entry name" value="Ribosomal_S7"/>
    <property type="match status" value="1"/>
</dbReference>
<dbReference type="PIRSF" id="PIRSF002122">
    <property type="entry name" value="RPS7p_RPS7a_RPS5e_RPS7o"/>
    <property type="match status" value="1"/>
</dbReference>
<dbReference type="SUPFAM" id="SSF47973">
    <property type="entry name" value="Ribosomal protein S7"/>
    <property type="match status" value="1"/>
</dbReference>
<proteinExistence type="inferred from homology"/>
<evidence type="ECO:0000255" key="1">
    <source>
        <dbReference type="HAMAP-Rule" id="MF_00480"/>
    </source>
</evidence>
<evidence type="ECO:0000305" key="2"/>
<accession>B0K5H2</accession>
<reference key="1">
    <citation type="submission" date="2008-01" db="EMBL/GenBank/DDBJ databases">
        <title>Complete sequence of Thermoanaerobacter sp. X514.</title>
        <authorList>
            <consortium name="US DOE Joint Genome Institute"/>
            <person name="Copeland A."/>
            <person name="Lucas S."/>
            <person name="Lapidus A."/>
            <person name="Barry K."/>
            <person name="Glavina del Rio T."/>
            <person name="Dalin E."/>
            <person name="Tice H."/>
            <person name="Pitluck S."/>
            <person name="Bruce D."/>
            <person name="Goodwin L."/>
            <person name="Saunders E."/>
            <person name="Brettin T."/>
            <person name="Detter J.C."/>
            <person name="Han C."/>
            <person name="Schmutz J."/>
            <person name="Larimer F."/>
            <person name="Land M."/>
            <person name="Hauser L."/>
            <person name="Kyrpides N."/>
            <person name="Kim E."/>
            <person name="Hemme C."/>
            <person name="Fields M.W."/>
            <person name="He Z."/>
            <person name="Zhou J."/>
            <person name="Richardson P."/>
        </authorList>
    </citation>
    <scope>NUCLEOTIDE SEQUENCE [LARGE SCALE GENOMIC DNA]</scope>
    <source>
        <strain>X514</strain>
    </source>
</reference>
<keyword id="KW-0687">Ribonucleoprotein</keyword>
<keyword id="KW-0689">Ribosomal protein</keyword>
<keyword id="KW-0694">RNA-binding</keyword>
<keyword id="KW-0699">rRNA-binding</keyword>
<keyword id="KW-0820">tRNA-binding</keyword>
<comment type="function">
    <text evidence="1">One of the primary rRNA binding proteins, it binds directly to 16S rRNA where it nucleates assembly of the head domain of the 30S subunit. Is located at the subunit interface close to the decoding center, probably blocks exit of the E-site tRNA.</text>
</comment>
<comment type="subunit">
    <text evidence="1">Part of the 30S ribosomal subunit. Contacts proteins S9 and S11.</text>
</comment>
<comment type="similarity">
    <text evidence="1">Belongs to the universal ribosomal protein uS7 family.</text>
</comment>
<feature type="chain" id="PRO_1000126017" description="Small ribosomal subunit protein uS7">
    <location>
        <begin position="1"/>
        <end position="156"/>
    </location>
</feature>
<sequence length="156" mass="17939">MPRKGHVERREVLPDPVYNSKKVSKLINKVMWDGKKSLAQKICYGAFDIIREKTGRDPLEVFEEALNNVMPVLEVRPRRVGGATYQVPMEVRPERRLSLGIRWLVEYARQRSGKSMMEKLAAEIIDAANNTGGSVKKKEDTHKMAEANKAFAHYRW</sequence>
<gene>
    <name evidence="1" type="primary">rpsG</name>
    <name type="ordered locus">Teth514_0863</name>
</gene>
<protein>
    <recommendedName>
        <fullName evidence="1">Small ribosomal subunit protein uS7</fullName>
    </recommendedName>
    <alternativeName>
        <fullName evidence="2">30S ribosomal protein S7</fullName>
    </alternativeName>
</protein>
<name>RS7_THEPX</name>
<organism>
    <name type="scientific">Thermoanaerobacter sp. (strain X514)</name>
    <dbReference type="NCBI Taxonomy" id="399726"/>
    <lineage>
        <taxon>Bacteria</taxon>
        <taxon>Bacillati</taxon>
        <taxon>Bacillota</taxon>
        <taxon>Clostridia</taxon>
        <taxon>Thermoanaerobacterales</taxon>
        <taxon>Thermoanaerobacteraceae</taxon>
        <taxon>Thermoanaerobacter</taxon>
    </lineage>
</organism>